<proteinExistence type="evidence at transcript level"/>
<name>DAXX_CHLAE</name>
<accession>O18805</accession>
<gene>
    <name type="primary">DAXX</name>
</gene>
<reference key="1">
    <citation type="journal article" date="1997" name="DNA Cell Biol.">
        <title>Cloning and expression of primate Daxx cDNAs and mapping of the human gene to chromosome 6p21.3 in the MHC region.</title>
        <authorList>
            <person name="Kiriakidou M."/>
            <person name="Driscoll D.A."/>
            <person name="Lopez-Guisa J.M."/>
            <person name="Strauss J.F. III"/>
        </authorList>
    </citation>
    <scope>NUCLEOTIDE SEQUENCE [MRNA]</scope>
</reference>
<dbReference type="EMBL" id="AF015957">
    <property type="protein sequence ID" value="AAB66586.1"/>
    <property type="molecule type" value="mRNA"/>
</dbReference>
<dbReference type="PIR" id="T03849">
    <property type="entry name" value="T03849"/>
</dbReference>
<dbReference type="BMRB" id="O18805"/>
<dbReference type="SMR" id="O18805"/>
<dbReference type="GO" id="GO:0000775">
    <property type="term" value="C:chromosome, centromeric region"/>
    <property type="evidence" value="ECO:0007669"/>
    <property type="project" value="UniProtKB-SubCell"/>
</dbReference>
<dbReference type="GO" id="GO:0005829">
    <property type="term" value="C:cytosol"/>
    <property type="evidence" value="ECO:0000250"/>
    <property type="project" value="UniProtKB"/>
</dbReference>
<dbReference type="GO" id="GO:0005730">
    <property type="term" value="C:nucleolus"/>
    <property type="evidence" value="ECO:0007669"/>
    <property type="project" value="UniProtKB-SubCell"/>
</dbReference>
<dbReference type="GO" id="GO:0005634">
    <property type="term" value="C:nucleus"/>
    <property type="evidence" value="ECO:0000314"/>
    <property type="project" value="CAFA"/>
</dbReference>
<dbReference type="GO" id="GO:0016605">
    <property type="term" value="C:PML body"/>
    <property type="evidence" value="ECO:0000250"/>
    <property type="project" value="UniProtKB"/>
</dbReference>
<dbReference type="GO" id="GO:0042393">
    <property type="term" value="F:histone binding"/>
    <property type="evidence" value="ECO:0007669"/>
    <property type="project" value="InterPro"/>
</dbReference>
<dbReference type="GO" id="GO:0050681">
    <property type="term" value="F:nuclear androgen receptor binding"/>
    <property type="evidence" value="ECO:0007669"/>
    <property type="project" value="TreeGrafter"/>
</dbReference>
<dbReference type="GO" id="GO:0042803">
    <property type="term" value="F:protein homodimerization activity"/>
    <property type="evidence" value="ECO:0000250"/>
    <property type="project" value="UniProtKB"/>
</dbReference>
<dbReference type="GO" id="GO:0061629">
    <property type="term" value="F:RNA polymerase II-specific DNA-binding transcription factor binding"/>
    <property type="evidence" value="ECO:0000250"/>
    <property type="project" value="UniProtKB"/>
</dbReference>
<dbReference type="GO" id="GO:0003713">
    <property type="term" value="F:transcription coactivator activity"/>
    <property type="evidence" value="ECO:0000250"/>
    <property type="project" value="UniProtKB"/>
</dbReference>
<dbReference type="GO" id="GO:0003714">
    <property type="term" value="F:transcription corepressor activity"/>
    <property type="evidence" value="ECO:0000315"/>
    <property type="project" value="CAFA"/>
</dbReference>
<dbReference type="GO" id="GO:0006915">
    <property type="term" value="P:apoptotic process"/>
    <property type="evidence" value="ECO:0007669"/>
    <property type="project" value="UniProtKB-KW"/>
</dbReference>
<dbReference type="GO" id="GO:0071276">
    <property type="term" value="P:cellular response to cadmium ion"/>
    <property type="evidence" value="ECO:0000250"/>
    <property type="project" value="UniProtKB"/>
</dbReference>
<dbReference type="GO" id="GO:0071280">
    <property type="term" value="P:cellular response to copper ion"/>
    <property type="evidence" value="ECO:0000250"/>
    <property type="project" value="UniProtKB"/>
</dbReference>
<dbReference type="GO" id="GO:0072738">
    <property type="term" value="P:cellular response to diamide"/>
    <property type="evidence" value="ECO:0000250"/>
    <property type="project" value="UniProtKB"/>
</dbReference>
<dbReference type="GO" id="GO:0034605">
    <property type="term" value="P:cellular response to heat"/>
    <property type="evidence" value="ECO:0000250"/>
    <property type="project" value="UniProtKB"/>
</dbReference>
<dbReference type="GO" id="GO:1903936">
    <property type="term" value="P:cellular response to sodium arsenite"/>
    <property type="evidence" value="ECO:0000250"/>
    <property type="project" value="UniProtKB"/>
</dbReference>
<dbReference type="GO" id="GO:0034620">
    <property type="term" value="P:cellular response to unfolded protein"/>
    <property type="evidence" value="ECO:0000250"/>
    <property type="project" value="UniProtKB"/>
</dbReference>
<dbReference type="GO" id="GO:0045892">
    <property type="term" value="P:negative regulation of DNA-templated transcription"/>
    <property type="evidence" value="ECO:0000315"/>
    <property type="project" value="UniProtKB"/>
</dbReference>
<dbReference type="GO" id="GO:0010629">
    <property type="term" value="P:negative regulation of gene expression"/>
    <property type="evidence" value="ECO:0000250"/>
    <property type="project" value="UniProtKB"/>
</dbReference>
<dbReference type="GO" id="GO:0006334">
    <property type="term" value="P:nucleosome assembly"/>
    <property type="evidence" value="ECO:0007669"/>
    <property type="project" value="TreeGrafter"/>
</dbReference>
<dbReference type="GO" id="GO:0042981">
    <property type="term" value="P:regulation of apoptotic process"/>
    <property type="evidence" value="ECO:0007669"/>
    <property type="project" value="TreeGrafter"/>
</dbReference>
<dbReference type="GO" id="GO:0031396">
    <property type="term" value="P:regulation of protein ubiquitination"/>
    <property type="evidence" value="ECO:0000250"/>
    <property type="project" value="UniProtKB"/>
</dbReference>
<dbReference type="CDD" id="cd13151">
    <property type="entry name" value="DAXX_helical_bundle"/>
    <property type="match status" value="1"/>
</dbReference>
<dbReference type="CDD" id="cd13150">
    <property type="entry name" value="DAXX_histone_binding"/>
    <property type="match status" value="1"/>
</dbReference>
<dbReference type="FunFam" id="1.10.8.810:FF:000001">
    <property type="entry name" value="Death domain-associated protein 6"/>
    <property type="match status" value="1"/>
</dbReference>
<dbReference type="FunFam" id="1.20.58.2170:FF:000001">
    <property type="entry name" value="Death domain-associated protein 6"/>
    <property type="match status" value="1"/>
</dbReference>
<dbReference type="Gene3D" id="1.20.58.2170">
    <property type="match status" value="1"/>
</dbReference>
<dbReference type="Gene3D" id="1.10.8.810">
    <property type="entry name" value="Daxx helical bundle domain"/>
    <property type="match status" value="1"/>
</dbReference>
<dbReference type="InterPro" id="IPR046378">
    <property type="entry name" value="DAXX_histone-bd"/>
</dbReference>
<dbReference type="InterPro" id="IPR046426">
    <property type="entry name" value="DAXX_histone-bd_sf"/>
</dbReference>
<dbReference type="InterPro" id="IPR031333">
    <property type="entry name" value="Daxx_N"/>
</dbReference>
<dbReference type="InterPro" id="IPR038298">
    <property type="entry name" value="Daxx_N_sf"/>
</dbReference>
<dbReference type="PANTHER" id="PTHR12766:SF7">
    <property type="entry name" value="DEATH DOMAIN-ASSOCIATED PROTEIN 6"/>
    <property type="match status" value="1"/>
</dbReference>
<dbReference type="PANTHER" id="PTHR12766">
    <property type="entry name" value="DEATH DOMAIN-ASSOCIATED PROTEIN 6 DAXX"/>
    <property type="match status" value="1"/>
</dbReference>
<dbReference type="Pfam" id="PF03344">
    <property type="entry name" value="Daxx"/>
    <property type="match status" value="1"/>
</dbReference>
<dbReference type="Pfam" id="PF20920">
    <property type="entry name" value="DAXX_hist_bd"/>
    <property type="match status" value="1"/>
</dbReference>
<protein>
    <recommendedName>
        <fullName>Death domain-associated protein 6</fullName>
    </recommendedName>
    <alternativeName>
        <fullName>Daxx</fullName>
    </alternativeName>
</protein>
<organism>
    <name type="scientific">Chlorocebus aethiops</name>
    <name type="common">Green monkey</name>
    <name type="synonym">Cercopithecus aethiops</name>
    <dbReference type="NCBI Taxonomy" id="9534"/>
    <lineage>
        <taxon>Eukaryota</taxon>
        <taxon>Metazoa</taxon>
        <taxon>Chordata</taxon>
        <taxon>Craniata</taxon>
        <taxon>Vertebrata</taxon>
        <taxon>Euteleostomi</taxon>
        <taxon>Mammalia</taxon>
        <taxon>Eutheria</taxon>
        <taxon>Euarchontoglires</taxon>
        <taxon>Primates</taxon>
        <taxon>Haplorrhini</taxon>
        <taxon>Catarrhini</taxon>
        <taxon>Cercopithecidae</taxon>
        <taxon>Cercopithecinae</taxon>
        <taxon>Chlorocebus</taxon>
    </lineage>
</organism>
<sequence length="736" mass="81316">MATANSIIVLDDDDENEAAAQPGPSHPLPSTASPEAEAPSSSEPHGARGSSSSGGKKCYKLENEKLFQEFLELCKTQTADHPEVVPFLCNRQQRAHSLFLASAEFCNILSRVLSRAQSRPFKLYVYINELCTVLKGHSAKKKLNLAPVATTSNEPSGNNPPTHLSLDPTNAENTASQAPRTRGSRRQIQRLEQLLALYVAEIRRLQERELDLSELDDPDSTYLQEARLKRKLIRLFGRLCELKDCSSLTGRVIKQRIPYRGTRYPKVNRRIERLINKPGPDTFPDYGDVLRAVKKAAARHSLGLPRQQLQLMAQDAFRNVGIRLQEQRHLDLIYNFGCHLTNDYRPGVDPALSYPVLARRLRENRILALIRLDQVISFYAMLQDGGEEGKKKKRRARLHGPSSHSANPPEPSLDSGEGPIGMASQGCPSASRAETDDEDDEESDEEEEEEEEEEEEEATDFEEEEDLEQMQEGQEDDEEEEEEEEAAGKDGDGSPMSSPQISTEKNLEPGKQISRSSGEQQNKVSPLLLSEEPLAPSSIDAESNGEQPEELTLEEESPVSQLFELEIEALPLDTPSFVEMDISFFRKQSEEPFTTVLENGAGMVSSTSFNGGVSPHNWGDSGPPCKKSRKEKKQTGSGPLGNSYVERQRSVHEKNGKKICTLPSPPSPLASLAPVADSSTRVDSPSHGLVTSSLCNPSPAQLSQTPQSQPPRPSTYKTSVATQCDPEEIIVLSDSD</sequence>
<keyword id="KW-0007">Acetylation</keyword>
<keyword id="KW-0053">Apoptosis</keyword>
<keyword id="KW-0137">Centromere</keyword>
<keyword id="KW-0143">Chaperone</keyword>
<keyword id="KW-0156">Chromatin regulator</keyword>
<keyword id="KW-0158">Chromosome</keyword>
<keyword id="KW-0175">Coiled coil</keyword>
<keyword id="KW-0963">Cytoplasm</keyword>
<keyword id="KW-1017">Isopeptide bond</keyword>
<keyword id="KW-0539">Nucleus</keyword>
<keyword id="KW-0597">Phosphoprotein</keyword>
<keyword id="KW-0678">Repressor</keyword>
<keyword id="KW-0804">Transcription</keyword>
<keyword id="KW-0805">Transcription regulation</keyword>
<keyword id="KW-0832">Ubl conjugation</keyword>
<comment type="function">
    <text evidence="1">Transcription corepressor known to repress transcriptional potential of several sumoylated transcription factors. Down-regulates basal and activated transcription. Its transcription repressor activity is modulated by recruiting it to subnuclear compartments like the nucleolus or PML/POD/ND10 nuclear bodies through interactions with MCSR1 and PML, respectively. Seems to regulate transcription in PML/POD/ND10 nuclear bodies together with PML and may influence TNFRSF6-dependent apoptosis thereby. Inhibits transcriptional activation of PAX3 and ETS1 through direct protein-protein interactions. Modulates PAX5 activity; the function seems to involve CREBBP. Acts as an adapter protein in a MDM2-DAXX-USP7 complex by regulating the RING-finger E3 ligase MDM2 ubiquitination activity. Under non-stress condition, in association with the deubiquitinating USP7, prevents MDM2 self-ubiquitination and enhances the intrinsic E3 ligase activity of MDM2 towards TP53, thereby promoting TP53 ubiquitination and subsequent proteasomal degradation. Upon DNA damage, its association with MDM2 and USP7 is disrupted, resulting in increased MDM2 autoubiquitination and consequently, MDM2 degradation, which leads to TP53 stabilization. Acts as a histone chaperone that facilitates deposition of histone H3.3. Acts as a targeting component of the chromatin remodeling complex ATRX:DAXX which has ATP-dependent DNA translocase activity and catalyzes the replication-independent deposition of histone H3.3 in pericentric DNA repeats outside S-phase and telomeres, and the in vitro remodeling of H3.3-containing nucleosomes. Does not affect the ATPase activity of ATRX but alleviates its transcription repression activity. Upon neuronal activation associates with regulatory elements of selected immediate early genes where it promotes deposition of histone H3.3 which may be linked to transcriptional induction of these genes. Required for the recruitment of histone H3.3:H4 dimers to PML-nuclear bodies (PML-NBs); the process is independent of ATRX and facilitated by ASF1A; PML-NBs are suggested to function as regulatory sites for the incorporation of newly synthesized histone H3.3 into chromatin. Proposed to mediate activation of the JNK pathway and apoptosis via MAP3K5 in response to signaling from TNFRSF6 and TGFBR2. Interaction with HSPB1/HSP27 may prevent interaction with TNFRSF6 and MAP3K5 and block DAXX-mediated apoptosis. In contrast, in lymphoid cells JNC activation and TNFRSF6-mediated apoptosis may not involve DAXX (By similarity).</text>
</comment>
<comment type="subunit">
    <text evidence="1">Homomultimer. Interacts (via C-terminus) with TNFRSF6 (via death domain). Interacts with PAX5, SLC2A4/GLUT4, MAP3K5, TGFBR2, phosphorylated dimeric HSPB1/HSP27, CENPC, ETS1, sumoylated PML, UBE2I, MCRS1 and TP53. Interacts (via N-terminus) with HIPK2 and HIPK3. Interacts with HIPK1, which induces translocation from PML/POD/ND10 nuclear bodies to chromatin and enhances association with HDAC1. Interacts (non-phosphorylated) with PAX3, PAX7, DEK, HDAC1, HDAC2, HDAC3, acetylated histone H4 and histones H2A, H2B, H3, H3.3 and H4. Interacts with SPOP; mediating CUL3-dependent proteasomal degradation. Interacts with CBP; the interaction is dependent the sumoylation of CBP and suppresses CBP transcriptional activity via recruitment of HDAC2 directly in the complex with TP53 and HIPK2. Interacts with AXIN1; the interaction stimulates the interaction of DAXX with TP53, stimulates 'Ser-46' phosphorylation of TP53 on and induces cell death on UV irradiation. Interacts with MDM2; the interaction is direct. Interacts with USP7; the interaction is direct and independent of MDM2 and TP53. Part of a complex with DAXX, MDM2 and USP7 under non-stress conditions. Interacts (via N-terminus) with RASSF1 (via C-terminus); the interaction is independent of MDM2 and TP53; RASSF1 isoform A disrupts interactions among MDM2, DAXX and USP7, thus contributing to the efficient activation of TP53 by promoting MDM2 self-ubiquitination in cell-cycle checkpoint control in response to DNA damage. Interacts with ATRX to form the chromatin remodeling complex ATRX:DAXX (By similarity).</text>
</comment>
<comment type="subcellular location">
    <subcellularLocation>
        <location evidence="4">Cytoplasm</location>
    </subcellularLocation>
    <subcellularLocation>
        <location evidence="4">Nucleus</location>
        <location evidence="4">Nucleoplasm</location>
    </subcellularLocation>
    <subcellularLocation>
        <location evidence="4">Nucleus</location>
        <location evidence="4">PML body</location>
    </subcellularLocation>
    <subcellularLocation>
        <location evidence="4">Nucleus</location>
        <location evidence="4">Nucleolus</location>
    </subcellularLocation>
    <subcellularLocation>
        <location evidence="4">Chromosome</location>
        <location evidence="4">Centromere</location>
    </subcellularLocation>
    <text evidence="4">Dispersed throughout the nucleoplasm, in PML/POD/ND10 nuclear bodies, and in nucleoli. Colocalizes with histone H3.3, ATRX, HIRA and ASF1A at PML-nuclear bodies. Colocalizes with a subset of interphase centromeres, but is absent from mitotic centromeres. Detected in cytoplasmic punctate structures. Translocates from the nucleus to the cytoplasm upon glucose deprivation or oxidative stress. Colocalizes with RASSF1 in the nucleus. Colocalizes with USP7 in nucleoplasma with accumulation in speckled structures.</text>
</comment>
<comment type="domain">
    <text evidence="1">The Sumo interaction motif mediates Sumo binding, and is required both for sumoylation and binding to sumoylated targets.</text>
</comment>
<comment type="PTM">
    <text evidence="1">Sumoylated with SUMO1 on multiple lysine residues.</text>
</comment>
<comment type="PTM">
    <text evidence="1">Polyubiquitinated; which is promoted by CUL3 and SPOP and results in proteasomal degradation. Ubiquitinated by MDM2; inducing its degradation. Deubiquitinated by USP7; leading to stabilize it (By similarity).</text>
</comment>
<comment type="similarity">
    <text evidence="7">Belongs to the DAXX family.</text>
</comment>
<feature type="chain" id="PRO_0000151257" description="Death domain-associated protein 6">
    <location>
        <begin position="1"/>
        <end position="736"/>
    </location>
</feature>
<feature type="region of interest" description="Necessary for interaction with USP7 and ATRX" evidence="1">
    <location>
        <begin position="1"/>
        <end position="160"/>
    </location>
</feature>
<feature type="region of interest" description="Disordered" evidence="6">
    <location>
        <begin position="1"/>
        <end position="55"/>
    </location>
</feature>
<feature type="region of interest" description="Disordered" evidence="6">
    <location>
        <begin position="148"/>
        <end position="185"/>
    </location>
</feature>
<feature type="region of interest" description="Interaction with histone H3.3" evidence="1">
    <location>
        <begin position="183"/>
        <end position="417"/>
    </location>
</feature>
<feature type="region of interest" description="Necessary for interaction with USP7" evidence="1">
    <location>
        <begin position="347"/>
        <end position="566"/>
    </location>
</feature>
<feature type="region of interest" description="Disordered" evidence="6">
    <location>
        <begin position="387"/>
        <end position="558"/>
    </location>
</feature>
<feature type="region of interest" description="Disordered" evidence="6">
    <location>
        <begin position="602"/>
        <end position="736"/>
    </location>
</feature>
<feature type="region of interest" description="Interaction with SPOP" evidence="1">
    <location>
        <begin position="622"/>
        <end position="736"/>
    </location>
</feature>
<feature type="region of interest" description="Sumo interaction motif (SIM)" evidence="1">
    <location>
        <begin position="729"/>
        <end position="736"/>
    </location>
</feature>
<feature type="coiled-coil region" evidence="5">
    <location>
        <begin position="180"/>
        <end position="216"/>
    </location>
</feature>
<feature type="coiled-coil region" evidence="5">
    <location>
        <begin position="430"/>
        <end position="490"/>
    </location>
</feature>
<feature type="short sequence motif" description="Nuclear localization signal" evidence="5">
    <location>
        <begin position="391"/>
        <end position="395"/>
    </location>
</feature>
<feature type="short sequence motif" description="Nuclear localization signal" evidence="5">
    <location>
        <begin position="624"/>
        <end position="630"/>
    </location>
</feature>
<feature type="compositionally biased region" description="Low complexity" evidence="6">
    <location>
        <begin position="28"/>
        <end position="55"/>
    </location>
</feature>
<feature type="compositionally biased region" description="Polar residues" evidence="6">
    <location>
        <begin position="149"/>
        <end position="179"/>
    </location>
</feature>
<feature type="compositionally biased region" description="Acidic residues" evidence="6">
    <location>
        <begin position="435"/>
        <end position="485"/>
    </location>
</feature>
<feature type="compositionally biased region" description="Polar residues" evidence="6">
    <location>
        <begin position="495"/>
        <end position="504"/>
    </location>
</feature>
<feature type="compositionally biased region" description="Polar residues" evidence="6">
    <location>
        <begin position="513"/>
        <end position="524"/>
    </location>
</feature>
<feature type="compositionally biased region" description="Low complexity" evidence="6">
    <location>
        <begin position="525"/>
        <end position="538"/>
    </location>
</feature>
<feature type="compositionally biased region" description="Acidic residues" evidence="6">
    <location>
        <begin position="547"/>
        <end position="557"/>
    </location>
</feature>
<feature type="compositionally biased region" description="Basic and acidic residues" evidence="6">
    <location>
        <begin position="646"/>
        <end position="656"/>
    </location>
</feature>
<feature type="compositionally biased region" description="Low complexity" evidence="6">
    <location>
        <begin position="669"/>
        <end position="679"/>
    </location>
</feature>
<feature type="compositionally biased region" description="Low complexity" evidence="6">
    <location>
        <begin position="697"/>
        <end position="707"/>
    </location>
</feature>
<feature type="modified residue" description="Phosphoserine" evidence="4">
    <location>
        <position position="25"/>
    </location>
</feature>
<feature type="modified residue" description="Phosphoserine" evidence="4">
    <location>
        <position position="213"/>
    </location>
</feature>
<feature type="modified residue" description="Phosphoserine" evidence="4">
    <location>
        <position position="412"/>
    </location>
</feature>
<feature type="modified residue" description="Phosphoserine" evidence="4">
    <location>
        <position position="424"/>
    </location>
</feature>
<feature type="modified residue" description="Phosphothreonine" evidence="2">
    <location>
        <position position="459"/>
    </location>
</feature>
<feature type="modified residue" description="Phosphoserine" evidence="4">
    <location>
        <position position="494"/>
    </location>
</feature>
<feature type="modified residue" description="Phosphoserine" evidence="3">
    <location>
        <position position="497"/>
    </location>
</feature>
<feature type="modified residue" description="N6-acetyllysine" evidence="4">
    <location>
        <position position="511"/>
    </location>
</feature>
<feature type="modified residue" description="Phosphoserine" evidence="3">
    <location>
        <position position="557"/>
    </location>
</feature>
<feature type="modified residue" description="Phosphoserine" evidence="3">
    <location>
        <position position="576"/>
    </location>
</feature>
<feature type="modified residue" description="Phosphoserine" evidence="4">
    <location>
        <position position="664"/>
    </location>
</feature>
<feature type="modified residue" description="Phosphoserine" evidence="4">
    <location>
        <position position="667"/>
    </location>
</feature>
<feature type="modified residue" description="Phosphoserine" evidence="4">
    <location>
        <position position="684"/>
    </location>
</feature>
<feature type="modified residue" description="Phosphoserine" evidence="4">
    <location>
        <position position="698"/>
    </location>
</feature>
<feature type="modified residue" description="Phosphoserine" evidence="4">
    <location>
        <position position="733"/>
    </location>
</feature>
<feature type="modified residue" description="Phosphoserine" evidence="4">
    <location>
        <position position="735"/>
    </location>
</feature>
<feature type="cross-link" description="Glycyl lysine isopeptide (Lys-Gly) (interchain with G-Cter in SUMO2)" evidence="4">
    <location>
        <position position="142"/>
    </location>
</feature>
<feature type="cross-link" description="Glycyl lysine isopeptide (Lys-Gly) (interchain with G-Cter in SUMO1)" evidence="4">
    <location>
        <position position="626"/>
    </location>
</feature>
<feature type="cross-link" description="Glycyl lysine isopeptide (Lys-Gly) (interchain with G-Cter in SUMO1)" evidence="4">
    <location>
        <position position="627"/>
    </location>
</feature>
<evidence type="ECO:0000250" key="1"/>
<evidence type="ECO:0000250" key="2">
    <source>
        <dbReference type="UniProtKB" id="O35613"/>
    </source>
</evidence>
<evidence type="ECO:0000250" key="3">
    <source>
        <dbReference type="UniProtKB" id="Q8VIB2"/>
    </source>
</evidence>
<evidence type="ECO:0000250" key="4">
    <source>
        <dbReference type="UniProtKB" id="Q9UER7"/>
    </source>
</evidence>
<evidence type="ECO:0000255" key="5"/>
<evidence type="ECO:0000256" key="6">
    <source>
        <dbReference type="SAM" id="MobiDB-lite"/>
    </source>
</evidence>
<evidence type="ECO:0000305" key="7"/>